<sequence>MVLIRVLANLLILQLSYAQKASELVIGGDECNINEHRSLVVLFNSSGFLCAGTLINQEWVLTAANCDRKNIRIKLGMHSKNVTNEDEQTRVPKRSTFVSVAKTSHQTLGTRTSMLIRLKRPVNDSPHIAPLSLPSSPPSVGSVCRVMGWGTISPTKVSYPDVPHCANINLLDYEVCREAHGGLPATSRTLCAGILEGGKDSCQGDSGGPLICNGQFQGILSWGVHPCGQPHKPGVYTKVSDYSEWIQSIIAGNTDVTCPP</sequence>
<organism>
    <name type="scientific">Bothrops alternatus</name>
    <name type="common">Urutu</name>
    <name type="synonym">Rhinocerophis alternatus</name>
    <dbReference type="NCBI Taxonomy" id="64174"/>
    <lineage>
        <taxon>Eukaryota</taxon>
        <taxon>Metazoa</taxon>
        <taxon>Chordata</taxon>
        <taxon>Craniata</taxon>
        <taxon>Vertebrata</taxon>
        <taxon>Euteleostomi</taxon>
        <taxon>Lepidosauria</taxon>
        <taxon>Squamata</taxon>
        <taxon>Bifurcata</taxon>
        <taxon>Unidentata</taxon>
        <taxon>Episquamata</taxon>
        <taxon>Toxicofera</taxon>
        <taxon>Serpentes</taxon>
        <taxon>Colubroidea</taxon>
        <taxon>Viperidae</taxon>
        <taxon>Crotalinae</taxon>
        <taxon>Bothrops</taxon>
    </lineage>
</organism>
<protein>
    <recommendedName>
        <fullName>Thrombin-like enzyme bhalternin</fullName>
        <shortName>SVTLE</shortName>
        <ecNumber>3.4.21.-</ecNumber>
    </recommendedName>
    <alternativeName>
        <fullName>Fibrinogen-clotting enzyme</fullName>
    </alternativeName>
    <alternativeName>
        <fullName>Snake venom serine protease</fullName>
        <shortName>SVSP</shortName>
    </alternativeName>
</protein>
<proteinExistence type="evidence at protein level"/>
<feature type="signal peptide" evidence="2">
    <location>
        <begin position="1"/>
        <end position="18"/>
    </location>
</feature>
<feature type="propeptide" id="PRO_0000394524" evidence="4">
    <location>
        <begin position="19"/>
        <end position="24"/>
    </location>
</feature>
<feature type="chain" id="PRO_0000394525" description="Thrombin-like enzyme bhalternin">
    <location>
        <begin position="25"/>
        <end position="260"/>
    </location>
</feature>
<feature type="domain" description="Peptidase S1" evidence="3">
    <location>
        <begin position="25"/>
        <end position="251"/>
    </location>
</feature>
<feature type="glycosylation site" description="N-linked (GlcNAc...) asparagine" evidence="2">
    <location>
        <position position="44"/>
    </location>
</feature>
<feature type="glycosylation site" description="N-linked (GlcNAc...) asparagine" evidence="2">
    <location>
        <position position="81"/>
    </location>
</feature>
<feature type="disulfide bond" evidence="3">
    <location>
        <begin position="31"/>
        <end position="165"/>
    </location>
</feature>
<feature type="disulfide bond" evidence="3">
    <location>
        <begin position="50"/>
        <end position="66"/>
    </location>
</feature>
<feature type="disulfide bond" evidence="3">
    <location>
        <begin position="144"/>
        <end position="212"/>
    </location>
</feature>
<feature type="disulfide bond" evidence="3">
    <location>
        <begin position="176"/>
        <end position="191"/>
    </location>
</feature>
<feature type="disulfide bond" evidence="3">
    <location>
        <begin position="202"/>
        <end position="227"/>
    </location>
</feature>
<comment type="function">
    <text evidence="4">Thrombin-like snake venom serine protease that induces blood clotting in vitro, defibrinogenation in vivo (by intraperitoneal injection into mice), albuminolytic and fibrinogenolytic activities. Preferentially cleaves the alpha chain of fibrinogen (FGA). Causes hemolysis in the heart, causes apparent hyperemia and lymphocytic interstitial pneumonitis in the lung, causes necrosis and inflammatory infiltrate in the liver, and causes glomerular congestion in the kidney. Also provokes a drastic myonecrosis.</text>
</comment>
<comment type="activity regulation">
    <text evidence="4">Inhibited by benzamidine and partially inhibited by EDTA.</text>
</comment>
<comment type="biophysicochemical properties">
    <phDependence>
        <text evidence="4">Optimum pH is 7.0-8.0.</text>
    </phDependence>
    <temperatureDependence>
        <text evidence="4">Optimum temperature is 30-40 degrees Celsius.</text>
    </temperatureDependence>
</comment>
<comment type="subunit">
    <text evidence="1">Monomer.</text>
</comment>
<comment type="subcellular location">
    <subcellularLocation>
        <location evidence="4">Secreted</location>
    </subcellularLocation>
</comment>
<comment type="tissue specificity">
    <text evidence="4">Expressed by the venom gland.</text>
</comment>
<comment type="miscellaneous">
    <text evidence="6">Negative results: does not present azocaseinolytic activity (PubMed:20184912). Does not provoke vascular lesions or hemorrhage.</text>
</comment>
<comment type="similarity">
    <text evidence="3">Belongs to the peptidase S1 family. Snake venom subfamily.</text>
</comment>
<comment type="caution">
    <text evidence="5">Lacks the typical His and Asp active sites in position 65 and 112, which are replaced by an Asn and Thr residues, preventing the protease activity. The sequence corresponding to the activity described in PubMed:20184912 may be slightly different from the sequence shown.</text>
</comment>
<keyword id="KW-1204">Blood coagulation cascade activating toxin</keyword>
<keyword id="KW-0204">Cytolysis</keyword>
<keyword id="KW-0903">Direct protein sequencing</keyword>
<keyword id="KW-1015">Disulfide bond</keyword>
<keyword id="KW-0325">Glycoprotein</keyword>
<keyword id="KW-0354">Hemolysis</keyword>
<keyword id="KW-1199">Hemostasis impairing toxin</keyword>
<keyword id="KW-0378">Hydrolase</keyword>
<keyword id="KW-0959">Myotoxin</keyword>
<keyword id="KW-0645">Protease</keyword>
<keyword id="KW-0964">Secreted</keyword>
<keyword id="KW-0720">Serine protease</keyword>
<keyword id="KW-0732">Signal</keyword>
<keyword id="KW-0800">Toxin</keyword>
<keyword id="KW-0865">Zymogen</keyword>
<dbReference type="EC" id="3.4.21.-"/>
<dbReference type="SMR" id="P0CG03"/>
<dbReference type="GO" id="GO:0005576">
    <property type="term" value="C:extracellular region"/>
    <property type="evidence" value="ECO:0007669"/>
    <property type="project" value="UniProtKB-SubCell"/>
</dbReference>
<dbReference type="GO" id="GO:0030141">
    <property type="term" value="C:secretory granule"/>
    <property type="evidence" value="ECO:0007669"/>
    <property type="project" value="TreeGrafter"/>
</dbReference>
<dbReference type="GO" id="GO:0004252">
    <property type="term" value="F:serine-type endopeptidase activity"/>
    <property type="evidence" value="ECO:0007669"/>
    <property type="project" value="InterPro"/>
</dbReference>
<dbReference type="GO" id="GO:0090729">
    <property type="term" value="F:toxin activity"/>
    <property type="evidence" value="ECO:0007669"/>
    <property type="project" value="UniProtKB-KW"/>
</dbReference>
<dbReference type="GO" id="GO:0031640">
    <property type="term" value="P:killing of cells of another organism"/>
    <property type="evidence" value="ECO:0007669"/>
    <property type="project" value="UniProtKB-KW"/>
</dbReference>
<dbReference type="GO" id="GO:0006508">
    <property type="term" value="P:proteolysis"/>
    <property type="evidence" value="ECO:0007669"/>
    <property type="project" value="UniProtKB-KW"/>
</dbReference>
<dbReference type="CDD" id="cd00190">
    <property type="entry name" value="Tryp_SPc"/>
    <property type="match status" value="1"/>
</dbReference>
<dbReference type="FunFam" id="2.40.10.10:FF:000158">
    <property type="entry name" value="Thrombin-like enzyme saxthrombin"/>
    <property type="match status" value="1"/>
</dbReference>
<dbReference type="Gene3D" id="2.40.10.10">
    <property type="entry name" value="Trypsin-like serine proteases"/>
    <property type="match status" value="2"/>
</dbReference>
<dbReference type="InterPro" id="IPR009003">
    <property type="entry name" value="Peptidase_S1_PA"/>
</dbReference>
<dbReference type="InterPro" id="IPR043504">
    <property type="entry name" value="Peptidase_S1_PA_chymotrypsin"/>
</dbReference>
<dbReference type="InterPro" id="IPR001314">
    <property type="entry name" value="Peptidase_S1A"/>
</dbReference>
<dbReference type="InterPro" id="IPR001254">
    <property type="entry name" value="Trypsin_dom"/>
</dbReference>
<dbReference type="InterPro" id="IPR033116">
    <property type="entry name" value="TRYPSIN_SER"/>
</dbReference>
<dbReference type="PANTHER" id="PTHR24271:SF47">
    <property type="entry name" value="KALLIKREIN-1"/>
    <property type="match status" value="1"/>
</dbReference>
<dbReference type="PANTHER" id="PTHR24271">
    <property type="entry name" value="KALLIKREIN-RELATED"/>
    <property type="match status" value="1"/>
</dbReference>
<dbReference type="Pfam" id="PF00089">
    <property type="entry name" value="Trypsin"/>
    <property type="match status" value="1"/>
</dbReference>
<dbReference type="PRINTS" id="PR00722">
    <property type="entry name" value="CHYMOTRYPSIN"/>
</dbReference>
<dbReference type="SMART" id="SM00020">
    <property type="entry name" value="Tryp_SPc"/>
    <property type="match status" value="1"/>
</dbReference>
<dbReference type="SUPFAM" id="SSF50494">
    <property type="entry name" value="Trypsin-like serine proteases"/>
    <property type="match status" value="1"/>
</dbReference>
<dbReference type="PROSITE" id="PS50240">
    <property type="entry name" value="TRYPSIN_DOM"/>
    <property type="match status" value="1"/>
</dbReference>
<dbReference type="PROSITE" id="PS00135">
    <property type="entry name" value="TRYPSIN_SER"/>
    <property type="match status" value="1"/>
</dbReference>
<accession>P0CG03</accession>
<evidence type="ECO:0000250" key="1"/>
<evidence type="ECO:0000255" key="2"/>
<evidence type="ECO:0000255" key="3">
    <source>
        <dbReference type="PROSITE-ProRule" id="PRU00274"/>
    </source>
</evidence>
<evidence type="ECO:0000269" key="4">
    <source>
    </source>
</evidence>
<evidence type="ECO:0000305" key="5"/>
<evidence type="ECO:0000305" key="6">
    <source>
    </source>
</evidence>
<reference key="1">
    <citation type="journal article" date="2010" name="Toxicon">
        <title>Bhalternin: functional and structural characterization of a new thrombin-like enzyme from Bothrops alternatus snake venom.</title>
        <authorList>
            <person name="Costa Jde O."/>
            <person name="Fonseca K.C."/>
            <person name="Mamede C.C."/>
            <person name="Beletti M.E."/>
            <person name="Santos-Filho N.A."/>
            <person name="Soares A.M."/>
            <person name="Arantes E.C."/>
            <person name="Hirayama S.N."/>
            <person name="Selistre-de-Araujo H.S."/>
            <person name="Fonseca F."/>
            <person name="Henrique-Silva F."/>
            <person name="Penha-Silva N."/>
            <person name="de Oliveira F."/>
        </authorList>
    </citation>
    <scope>NUCLEOTIDE SEQUENCE [MRNA]</scope>
    <scope>PROTEIN SEQUENCE OF 25-43</scope>
    <scope>FUNCTION</scope>
    <scope>ACTIVITY REGULATION</scope>
    <scope>BIOPHYSICOCHEMICAL PROPERTIES</scope>
    <scope>SUBCELLULAR LOCATION</scope>
    <scope>TISSUE SPECIFICITY</scope>
    <source>
        <tissue>Venom</tissue>
        <tissue>Venom gland</tissue>
    </source>
</reference>
<name>VSPBH_BOTAL</name>